<feature type="signal peptide" evidence="2">
    <location>
        <begin position="1"/>
        <end position="28"/>
    </location>
</feature>
<feature type="chain" id="PRO_0000018691" description="Cation efflux system protein CusB">
    <location>
        <begin position="29"/>
        <end position="407"/>
    </location>
</feature>
<feature type="sequence conflict" description="In Ref. 2; BAB34035." evidence="3" ref="2">
    <original>K</original>
    <variation>Q</variation>
    <location>
        <position position="316"/>
    </location>
</feature>
<keyword id="KW-0186">Copper</keyword>
<keyword id="KW-0187">Copper transport</keyword>
<keyword id="KW-0406">Ion transport</keyword>
<keyword id="KW-1185">Reference proteome</keyword>
<keyword id="KW-0732">Signal</keyword>
<keyword id="KW-0813">Transport</keyword>
<evidence type="ECO:0000250" key="1"/>
<evidence type="ECO:0000255" key="2"/>
<evidence type="ECO:0000305" key="3"/>
<gene>
    <name type="primary">cusB</name>
    <name type="ordered locus">Z0713</name>
    <name type="ordered locus">ECs0612</name>
</gene>
<accession>Q8XEH9</accession>
<dbReference type="EMBL" id="AE005174">
    <property type="protein sequence ID" value="AAG54907.1"/>
    <property type="molecule type" value="Genomic_DNA"/>
</dbReference>
<dbReference type="EMBL" id="BA000007">
    <property type="protein sequence ID" value="BAB34035.1"/>
    <property type="molecule type" value="Genomic_DNA"/>
</dbReference>
<dbReference type="PIR" id="D90705">
    <property type="entry name" value="D90705"/>
</dbReference>
<dbReference type="PIR" id="G85555">
    <property type="entry name" value="G85555"/>
</dbReference>
<dbReference type="RefSeq" id="NP_308639.1">
    <property type="nucleotide sequence ID" value="NC_002695.1"/>
</dbReference>
<dbReference type="RefSeq" id="WP_000717112.1">
    <property type="nucleotide sequence ID" value="NZ_LPWC02000002.1"/>
</dbReference>
<dbReference type="SMR" id="Q8XEH9"/>
<dbReference type="STRING" id="155864.Z0713"/>
<dbReference type="GeneID" id="916970"/>
<dbReference type="KEGG" id="ece:Z0713"/>
<dbReference type="KEGG" id="ecs:ECs_0612"/>
<dbReference type="PATRIC" id="fig|386585.9.peg.720"/>
<dbReference type="eggNOG" id="COG0845">
    <property type="taxonomic scope" value="Bacteria"/>
</dbReference>
<dbReference type="HOGENOM" id="CLU_018816_13_1_6"/>
<dbReference type="Proteomes" id="UP000000558">
    <property type="component" value="Chromosome"/>
</dbReference>
<dbReference type="Proteomes" id="UP000002519">
    <property type="component" value="Chromosome"/>
</dbReference>
<dbReference type="GO" id="GO:0016020">
    <property type="term" value="C:membrane"/>
    <property type="evidence" value="ECO:0007669"/>
    <property type="project" value="InterPro"/>
</dbReference>
<dbReference type="GO" id="GO:0030288">
    <property type="term" value="C:outer membrane-bounded periplasmic space"/>
    <property type="evidence" value="ECO:0007669"/>
    <property type="project" value="TreeGrafter"/>
</dbReference>
<dbReference type="GO" id="GO:0046914">
    <property type="term" value="F:transition metal ion binding"/>
    <property type="evidence" value="ECO:0007669"/>
    <property type="project" value="TreeGrafter"/>
</dbReference>
<dbReference type="GO" id="GO:0022857">
    <property type="term" value="F:transmembrane transporter activity"/>
    <property type="evidence" value="ECO:0007669"/>
    <property type="project" value="InterPro"/>
</dbReference>
<dbReference type="GO" id="GO:0060003">
    <property type="term" value="P:copper ion export"/>
    <property type="evidence" value="ECO:0007669"/>
    <property type="project" value="TreeGrafter"/>
</dbReference>
<dbReference type="GO" id="GO:0015679">
    <property type="term" value="P:plasma membrane copper ion transport"/>
    <property type="evidence" value="ECO:0007669"/>
    <property type="project" value="TreeGrafter"/>
</dbReference>
<dbReference type="GO" id="GO:0009636">
    <property type="term" value="P:response to toxic substance"/>
    <property type="evidence" value="ECO:0007669"/>
    <property type="project" value="UniProtKB-ARBA"/>
</dbReference>
<dbReference type="FunFam" id="2.40.420.20:FF:000003">
    <property type="entry name" value="Cation efflux system protein cusB"/>
    <property type="match status" value="1"/>
</dbReference>
<dbReference type="Gene3D" id="2.40.30.170">
    <property type="match status" value="1"/>
</dbReference>
<dbReference type="Gene3D" id="2.40.420.20">
    <property type="match status" value="1"/>
</dbReference>
<dbReference type="Gene3D" id="6.10.140.730">
    <property type="match status" value="1"/>
</dbReference>
<dbReference type="InterPro" id="IPR043602">
    <property type="entry name" value="CusB-like_dom_1"/>
</dbReference>
<dbReference type="InterPro" id="IPR032317">
    <property type="entry name" value="CusB_D23"/>
</dbReference>
<dbReference type="InterPro" id="IPR045800">
    <property type="entry name" value="HMBD"/>
</dbReference>
<dbReference type="InterPro" id="IPR051909">
    <property type="entry name" value="MFP_Cation_Efflux"/>
</dbReference>
<dbReference type="InterPro" id="IPR006143">
    <property type="entry name" value="RND_pump_MFP"/>
</dbReference>
<dbReference type="NCBIfam" id="NF007303">
    <property type="entry name" value="PRK09783.1"/>
    <property type="match status" value="1"/>
</dbReference>
<dbReference type="NCBIfam" id="TIGR01730">
    <property type="entry name" value="RND_mfp"/>
    <property type="match status" value="1"/>
</dbReference>
<dbReference type="PANTHER" id="PTHR30097">
    <property type="entry name" value="CATION EFFLUX SYSTEM PROTEIN CUSB"/>
    <property type="match status" value="1"/>
</dbReference>
<dbReference type="PANTHER" id="PTHR30097:SF15">
    <property type="entry name" value="CATION EFFLUX SYSTEM PROTEIN CUSB"/>
    <property type="match status" value="1"/>
</dbReference>
<dbReference type="Pfam" id="PF00529">
    <property type="entry name" value="CusB_dom_1"/>
    <property type="match status" value="1"/>
</dbReference>
<dbReference type="Pfam" id="PF16576">
    <property type="entry name" value="HlyD_D23"/>
    <property type="match status" value="1"/>
</dbReference>
<dbReference type="Pfam" id="PF19335">
    <property type="entry name" value="HMBD"/>
    <property type="match status" value="1"/>
</dbReference>
<dbReference type="SUPFAM" id="SSF111369">
    <property type="entry name" value="HlyD-like secretion proteins"/>
    <property type="match status" value="1"/>
</dbReference>
<sequence>MKKIALIIGSMIAGGIISAAGFTWFAKAEPPAEKTSTAERKILFWYDPMYPNTRFDKPGKSPFMDMDLVPKYADEESSASGVRIDPTQTQNLGVKTATVTRGPLTFAQSFPANVSYNEYQYAIVQARAAGFIDKVYPLTVGDKVQKGAPLLDLTIPDWVEAQSEYLLLRETGGTATQTEGILERLRLAGMPEADIRRLIATQKIQTRFTLKAPIDGVITAFDLRAGMNIAKDNVVAKIQGMDPVWVTAAIPESIAWLVKDASQFTLTVPARPDKTLTIRKWTLLPGVDAATRTLQLRLEVDNADEALKPGMNAWLKLNTASEPMLLIPSQALIDTGSEQRVITVDADGRFVPKRVAVFQASQGVTALRSGLAEGEKVVSSGLFLIDSEANISGALERMRSESATHAH</sequence>
<comment type="function">
    <text evidence="1">Part of a cation efflux system that mediates resistance to copper and silver.</text>
</comment>
<comment type="subunit">
    <text evidence="1">The cus efflux system is composed of CusA, CusB, CusC and CusF.</text>
</comment>
<comment type="induction">
    <text evidence="3">Transcriptionally regulated by CusR in response to copper and silver ions.</text>
</comment>
<comment type="similarity">
    <text evidence="3">Belongs to the membrane fusion protein (MFP) (TC 8.A.1) family.</text>
</comment>
<name>CUSB_ECO57</name>
<reference key="1">
    <citation type="journal article" date="2001" name="Nature">
        <title>Genome sequence of enterohaemorrhagic Escherichia coli O157:H7.</title>
        <authorList>
            <person name="Perna N.T."/>
            <person name="Plunkett G. III"/>
            <person name="Burland V."/>
            <person name="Mau B."/>
            <person name="Glasner J.D."/>
            <person name="Rose D.J."/>
            <person name="Mayhew G.F."/>
            <person name="Evans P.S."/>
            <person name="Gregor J."/>
            <person name="Kirkpatrick H.A."/>
            <person name="Posfai G."/>
            <person name="Hackett J."/>
            <person name="Klink S."/>
            <person name="Boutin A."/>
            <person name="Shao Y."/>
            <person name="Miller L."/>
            <person name="Grotbeck E.J."/>
            <person name="Davis N.W."/>
            <person name="Lim A."/>
            <person name="Dimalanta E.T."/>
            <person name="Potamousis K."/>
            <person name="Apodaca J."/>
            <person name="Anantharaman T.S."/>
            <person name="Lin J."/>
            <person name="Yen G."/>
            <person name="Schwartz D.C."/>
            <person name="Welch R.A."/>
            <person name="Blattner F.R."/>
        </authorList>
    </citation>
    <scope>NUCLEOTIDE SEQUENCE [LARGE SCALE GENOMIC DNA]</scope>
    <source>
        <strain>O157:H7 / EDL933 / ATCC 700927 / EHEC</strain>
    </source>
</reference>
<reference key="2">
    <citation type="journal article" date="2001" name="DNA Res.">
        <title>Complete genome sequence of enterohemorrhagic Escherichia coli O157:H7 and genomic comparison with a laboratory strain K-12.</title>
        <authorList>
            <person name="Hayashi T."/>
            <person name="Makino K."/>
            <person name="Ohnishi M."/>
            <person name="Kurokawa K."/>
            <person name="Ishii K."/>
            <person name="Yokoyama K."/>
            <person name="Han C.-G."/>
            <person name="Ohtsubo E."/>
            <person name="Nakayama K."/>
            <person name="Murata T."/>
            <person name="Tanaka M."/>
            <person name="Tobe T."/>
            <person name="Iida T."/>
            <person name="Takami H."/>
            <person name="Honda T."/>
            <person name="Sasakawa C."/>
            <person name="Ogasawara N."/>
            <person name="Yasunaga T."/>
            <person name="Kuhara S."/>
            <person name="Shiba T."/>
            <person name="Hattori M."/>
            <person name="Shinagawa H."/>
        </authorList>
    </citation>
    <scope>NUCLEOTIDE SEQUENCE [LARGE SCALE GENOMIC DNA]</scope>
    <source>
        <strain>O157:H7 / Sakai / RIMD 0509952 / EHEC</strain>
    </source>
</reference>
<organism>
    <name type="scientific">Escherichia coli O157:H7</name>
    <dbReference type="NCBI Taxonomy" id="83334"/>
    <lineage>
        <taxon>Bacteria</taxon>
        <taxon>Pseudomonadati</taxon>
        <taxon>Pseudomonadota</taxon>
        <taxon>Gammaproteobacteria</taxon>
        <taxon>Enterobacterales</taxon>
        <taxon>Enterobacteriaceae</taxon>
        <taxon>Escherichia</taxon>
    </lineage>
</organism>
<proteinExistence type="inferred from homology"/>
<protein>
    <recommendedName>
        <fullName>Cation efflux system protein CusB</fullName>
    </recommendedName>
</protein>